<keyword id="KW-0119">Carbohydrate metabolism</keyword>
<keyword id="KW-0963">Cytoplasm</keyword>
<keyword id="KW-0413">Isomerase</keyword>
<name>RBSD_BACCN</name>
<gene>
    <name evidence="1" type="primary">rbsD</name>
    <name type="ordered locus">Bcer98_0561</name>
</gene>
<evidence type="ECO:0000255" key="1">
    <source>
        <dbReference type="HAMAP-Rule" id="MF_01661"/>
    </source>
</evidence>
<feature type="chain" id="PRO_0000346174" description="D-ribose pyranase">
    <location>
        <begin position="1"/>
        <end position="131"/>
    </location>
</feature>
<feature type="active site" description="Proton donor" evidence="1">
    <location>
        <position position="20"/>
    </location>
</feature>
<feature type="binding site" evidence="1">
    <location>
        <position position="28"/>
    </location>
    <ligand>
        <name>substrate</name>
    </ligand>
</feature>
<feature type="binding site" evidence="1">
    <location>
        <position position="98"/>
    </location>
    <ligand>
        <name>substrate</name>
    </ligand>
</feature>
<feature type="binding site" evidence="1">
    <location>
        <begin position="120"/>
        <end position="122"/>
    </location>
    <ligand>
        <name>substrate</name>
    </ligand>
</feature>
<reference key="1">
    <citation type="journal article" date="2008" name="Chem. Biol. Interact.">
        <title>Extending the Bacillus cereus group genomics to putative food-borne pathogens of different toxicity.</title>
        <authorList>
            <person name="Lapidus A."/>
            <person name="Goltsman E."/>
            <person name="Auger S."/>
            <person name="Galleron N."/>
            <person name="Segurens B."/>
            <person name="Dossat C."/>
            <person name="Land M.L."/>
            <person name="Broussolle V."/>
            <person name="Brillard J."/>
            <person name="Guinebretiere M.-H."/>
            <person name="Sanchis V."/>
            <person name="Nguen-the C."/>
            <person name="Lereclus D."/>
            <person name="Richardson P."/>
            <person name="Wincker P."/>
            <person name="Weissenbach J."/>
            <person name="Ehrlich S.D."/>
            <person name="Sorokin A."/>
        </authorList>
    </citation>
    <scope>NUCLEOTIDE SEQUENCE [LARGE SCALE GENOMIC DNA]</scope>
    <source>
        <strain>DSM 22905 / CIP 110041 / 391-98 / NVH 391-98</strain>
    </source>
</reference>
<protein>
    <recommendedName>
        <fullName evidence="1">D-ribose pyranase</fullName>
        <ecNumber evidence="1">5.4.99.62</ecNumber>
    </recommendedName>
</protein>
<proteinExistence type="inferred from homology"/>
<dbReference type="EC" id="5.4.99.62" evidence="1"/>
<dbReference type="EMBL" id="CP000764">
    <property type="protein sequence ID" value="ABS20910.1"/>
    <property type="molecule type" value="Genomic_DNA"/>
</dbReference>
<dbReference type="RefSeq" id="WP_011983666.1">
    <property type="nucleotide sequence ID" value="NC_009674.1"/>
</dbReference>
<dbReference type="SMR" id="A7GLA2"/>
<dbReference type="STRING" id="315749.Bcer98_0561"/>
<dbReference type="GeneID" id="33895918"/>
<dbReference type="KEGG" id="bcy:Bcer98_0561"/>
<dbReference type="eggNOG" id="COG1869">
    <property type="taxonomic scope" value="Bacteria"/>
</dbReference>
<dbReference type="HOGENOM" id="CLU_135498_0_0_9"/>
<dbReference type="OrthoDB" id="9805009at2"/>
<dbReference type="UniPathway" id="UPA00916">
    <property type="reaction ID" value="UER00888"/>
</dbReference>
<dbReference type="Proteomes" id="UP000002300">
    <property type="component" value="Chromosome"/>
</dbReference>
<dbReference type="GO" id="GO:0005829">
    <property type="term" value="C:cytosol"/>
    <property type="evidence" value="ECO:0007669"/>
    <property type="project" value="TreeGrafter"/>
</dbReference>
<dbReference type="GO" id="GO:0062193">
    <property type="term" value="F:D-ribose pyranase activity"/>
    <property type="evidence" value="ECO:0007669"/>
    <property type="project" value="UniProtKB-EC"/>
</dbReference>
<dbReference type="GO" id="GO:0016872">
    <property type="term" value="F:intramolecular lyase activity"/>
    <property type="evidence" value="ECO:0007669"/>
    <property type="project" value="UniProtKB-UniRule"/>
</dbReference>
<dbReference type="GO" id="GO:0048029">
    <property type="term" value="F:monosaccharide binding"/>
    <property type="evidence" value="ECO:0007669"/>
    <property type="project" value="InterPro"/>
</dbReference>
<dbReference type="GO" id="GO:0019303">
    <property type="term" value="P:D-ribose catabolic process"/>
    <property type="evidence" value="ECO:0007669"/>
    <property type="project" value="UniProtKB-UniRule"/>
</dbReference>
<dbReference type="FunFam" id="3.40.1650.10:FF:000003">
    <property type="entry name" value="D-ribose pyranase"/>
    <property type="match status" value="1"/>
</dbReference>
<dbReference type="Gene3D" id="3.40.1650.10">
    <property type="entry name" value="RbsD-like domain"/>
    <property type="match status" value="1"/>
</dbReference>
<dbReference type="HAMAP" id="MF_01661">
    <property type="entry name" value="D_rib_pyranase"/>
    <property type="match status" value="1"/>
</dbReference>
<dbReference type="InterPro" id="IPR023064">
    <property type="entry name" value="D-ribose_pyranase"/>
</dbReference>
<dbReference type="InterPro" id="IPR023750">
    <property type="entry name" value="RbsD-like_sf"/>
</dbReference>
<dbReference type="InterPro" id="IPR007721">
    <property type="entry name" value="RbsD_FucU"/>
</dbReference>
<dbReference type="NCBIfam" id="NF008761">
    <property type="entry name" value="PRK11797.1"/>
    <property type="match status" value="1"/>
</dbReference>
<dbReference type="PANTHER" id="PTHR37831">
    <property type="entry name" value="D-RIBOSE PYRANASE"/>
    <property type="match status" value="1"/>
</dbReference>
<dbReference type="PANTHER" id="PTHR37831:SF1">
    <property type="entry name" value="D-RIBOSE PYRANASE"/>
    <property type="match status" value="1"/>
</dbReference>
<dbReference type="Pfam" id="PF05025">
    <property type="entry name" value="RbsD_FucU"/>
    <property type="match status" value="1"/>
</dbReference>
<dbReference type="SUPFAM" id="SSF102546">
    <property type="entry name" value="RbsD-like"/>
    <property type="match status" value="1"/>
</dbReference>
<accession>A7GLA2</accession>
<sequence length="131" mass="14542">MKKHGVLNSEIAAILAALGHTDTIVIADCGLPIPDSVKRIDLAVELGKPSFLDVLQVVIEDMAIEKVTVAEEITTNNREIYKEIETRLKEANFEYVLHEEFKEKTKQAKAIIRTGEATPYANIILHAGVIF</sequence>
<comment type="function">
    <text evidence="1">Catalyzes the interconversion of beta-pyran and beta-furan forms of D-ribose.</text>
</comment>
<comment type="catalytic activity">
    <reaction evidence="1">
        <text>beta-D-ribopyranose = beta-D-ribofuranose</text>
        <dbReference type="Rhea" id="RHEA:25432"/>
        <dbReference type="ChEBI" id="CHEBI:27476"/>
        <dbReference type="ChEBI" id="CHEBI:47002"/>
        <dbReference type="EC" id="5.4.99.62"/>
    </reaction>
</comment>
<comment type="pathway">
    <text evidence="1">Carbohydrate metabolism; D-ribose degradation; D-ribose 5-phosphate from beta-D-ribopyranose: step 1/2.</text>
</comment>
<comment type="subunit">
    <text evidence="1">Homodecamer.</text>
</comment>
<comment type="subcellular location">
    <subcellularLocation>
        <location evidence="1">Cytoplasm</location>
    </subcellularLocation>
</comment>
<comment type="similarity">
    <text evidence="1">Belongs to the RbsD / FucU family. RbsD subfamily.</text>
</comment>
<organism>
    <name type="scientific">Bacillus cytotoxicus (strain DSM 22905 / CIP 110041 / 391-98 / NVH 391-98)</name>
    <dbReference type="NCBI Taxonomy" id="315749"/>
    <lineage>
        <taxon>Bacteria</taxon>
        <taxon>Bacillati</taxon>
        <taxon>Bacillota</taxon>
        <taxon>Bacilli</taxon>
        <taxon>Bacillales</taxon>
        <taxon>Bacillaceae</taxon>
        <taxon>Bacillus</taxon>
        <taxon>Bacillus cereus group</taxon>
    </lineage>
</organism>